<evidence type="ECO:0000255" key="1">
    <source>
        <dbReference type="HAMAP-Rule" id="MF_00423"/>
    </source>
</evidence>
<proteinExistence type="inferred from homology"/>
<protein>
    <recommendedName>
        <fullName evidence="1">L-seryl-tRNA(Sec) selenium transferase</fullName>
        <ecNumber evidence="1">2.9.1.1</ecNumber>
    </recommendedName>
    <alternativeName>
        <fullName evidence="1">Selenocysteine synthase</fullName>
        <shortName evidence="1">Sec synthase</shortName>
    </alternativeName>
    <alternativeName>
        <fullName evidence="1">Selenocysteinyl-tRNA(Sec) synthase</fullName>
    </alternativeName>
</protein>
<sequence length="468" mass="50456">MSSVRLPSVDRLLRSAAAAPLHQRYGREALLATLRDLLDELREPARQGALAAIELSEAVLAGRAGERLAAQHASRVRRVFNLTGTVLHTNLGRALLPEEAIEAITLAARYPLNLEFDLASGKRGDRDDLITGLIRELTGAEAVTVVNNNAAAVLLALNSLGARKEGIISRGELIEIGGAFRIPDIMTRAGVRLHEVGTTNRTHARDYEAAIGPRSGLLMRVHTSNYSVQGFTASVPTAQLAAIAHGHGLPLLEDLGSGTLVDLTRWGLPKEPTVQEALADGADIVTFSGDKLLGGPQAGLILGNRELVGRIKKNPLKRALRVDKLTLAALEAVLGLYRDPDRLAERLTTLRLLSRPAVEIRAQAERLAPALAEALGEDWEVAVVDALGMIGSGAQPVARLASAALCLRPRQPRRLRGRTLRNLEEALRGLPLPVIGRLDDDALWLDLRQLDDEPAFRAQLPRLRGELS</sequence>
<dbReference type="EC" id="2.9.1.1" evidence="1"/>
<dbReference type="EMBL" id="CP000744">
    <property type="protein sequence ID" value="ABR84515.1"/>
    <property type="molecule type" value="Genomic_DNA"/>
</dbReference>
<dbReference type="RefSeq" id="WP_012077530.1">
    <property type="nucleotide sequence ID" value="NC_009656.1"/>
</dbReference>
<dbReference type="SMR" id="A6VCR3"/>
<dbReference type="KEGG" id="pap:PSPA7_5527"/>
<dbReference type="HOGENOM" id="CLU_038142_1_0_6"/>
<dbReference type="UniPathway" id="UPA00906">
    <property type="reaction ID" value="UER00896"/>
</dbReference>
<dbReference type="Proteomes" id="UP000001582">
    <property type="component" value="Chromosome"/>
</dbReference>
<dbReference type="GO" id="GO:0005737">
    <property type="term" value="C:cytoplasm"/>
    <property type="evidence" value="ECO:0007669"/>
    <property type="project" value="UniProtKB-SubCell"/>
</dbReference>
<dbReference type="GO" id="GO:0004125">
    <property type="term" value="F:L-seryl-tRNA(Sec) selenium transferase activity"/>
    <property type="evidence" value="ECO:0007669"/>
    <property type="project" value="UniProtKB-UniRule"/>
</dbReference>
<dbReference type="GO" id="GO:0001717">
    <property type="term" value="P:conversion of seryl-tRNAsec to selenocys-tRNAsec"/>
    <property type="evidence" value="ECO:0007669"/>
    <property type="project" value="UniProtKB-UniRule"/>
</dbReference>
<dbReference type="GO" id="GO:0001514">
    <property type="term" value="P:selenocysteine incorporation"/>
    <property type="evidence" value="ECO:0007669"/>
    <property type="project" value="UniProtKB-UniRule"/>
</dbReference>
<dbReference type="FunFam" id="3.40.640.10:FF:000028">
    <property type="entry name" value="L-seryl-tRNA(Sec) selenium transferase"/>
    <property type="match status" value="1"/>
</dbReference>
<dbReference type="Gene3D" id="3.90.1150.180">
    <property type="match status" value="1"/>
</dbReference>
<dbReference type="Gene3D" id="3.40.640.10">
    <property type="entry name" value="Type I PLP-dependent aspartate aminotransferase-like (Major domain)"/>
    <property type="match status" value="1"/>
</dbReference>
<dbReference type="HAMAP" id="MF_00423">
    <property type="entry name" value="SelA"/>
    <property type="match status" value="1"/>
</dbReference>
<dbReference type="InterPro" id="IPR015424">
    <property type="entry name" value="PyrdxlP-dep_Trfase"/>
</dbReference>
<dbReference type="InterPro" id="IPR015421">
    <property type="entry name" value="PyrdxlP-dep_Trfase_major"/>
</dbReference>
<dbReference type="InterPro" id="IPR018319">
    <property type="entry name" value="SelA-like"/>
</dbReference>
<dbReference type="InterPro" id="IPR004534">
    <property type="entry name" value="SelA_trans"/>
</dbReference>
<dbReference type="InterPro" id="IPR025862">
    <property type="entry name" value="SelA_trans_N_dom"/>
</dbReference>
<dbReference type="NCBIfam" id="TIGR00474">
    <property type="entry name" value="selA"/>
    <property type="match status" value="1"/>
</dbReference>
<dbReference type="PANTHER" id="PTHR32328">
    <property type="entry name" value="L-SERYL-TRNA(SEC) SELENIUM TRANSFERASE"/>
    <property type="match status" value="1"/>
</dbReference>
<dbReference type="PANTHER" id="PTHR32328:SF0">
    <property type="entry name" value="L-SERYL-TRNA(SEC) SELENIUM TRANSFERASE"/>
    <property type="match status" value="1"/>
</dbReference>
<dbReference type="Pfam" id="PF12390">
    <property type="entry name" value="Se-cys_synth_N"/>
    <property type="match status" value="1"/>
</dbReference>
<dbReference type="Pfam" id="PF03841">
    <property type="entry name" value="SelA"/>
    <property type="match status" value="1"/>
</dbReference>
<dbReference type="SUPFAM" id="SSF53383">
    <property type="entry name" value="PLP-dependent transferases"/>
    <property type="match status" value="1"/>
</dbReference>
<organism>
    <name type="scientific">Pseudomonas paraeruginosa (strain DSM 24068 / PA7)</name>
    <name type="common">Pseudomonas aeruginosa (strain PA7)</name>
    <dbReference type="NCBI Taxonomy" id="381754"/>
    <lineage>
        <taxon>Bacteria</taxon>
        <taxon>Pseudomonadati</taxon>
        <taxon>Pseudomonadota</taxon>
        <taxon>Gammaproteobacteria</taxon>
        <taxon>Pseudomonadales</taxon>
        <taxon>Pseudomonadaceae</taxon>
        <taxon>Pseudomonas</taxon>
        <taxon>Pseudomonas paraeruginosa</taxon>
    </lineage>
</organism>
<keyword id="KW-0963">Cytoplasm</keyword>
<keyword id="KW-0648">Protein biosynthesis</keyword>
<keyword id="KW-0663">Pyridoxal phosphate</keyword>
<keyword id="KW-0711">Selenium</keyword>
<keyword id="KW-0808">Transferase</keyword>
<reference key="1">
    <citation type="submission" date="2007-06" db="EMBL/GenBank/DDBJ databases">
        <authorList>
            <person name="Dodson R.J."/>
            <person name="Harkins D."/>
            <person name="Paulsen I.T."/>
        </authorList>
    </citation>
    <scope>NUCLEOTIDE SEQUENCE [LARGE SCALE GENOMIC DNA]</scope>
    <source>
        <strain>DSM 24068 / PA7</strain>
    </source>
</reference>
<accession>A6VCR3</accession>
<gene>
    <name evidence="1" type="primary">selA</name>
    <name type="ordered locus">PSPA7_5527</name>
</gene>
<comment type="function">
    <text evidence="1">Converts seryl-tRNA(Sec) to selenocysteinyl-tRNA(Sec) required for selenoprotein biosynthesis.</text>
</comment>
<comment type="catalytic activity">
    <reaction evidence="1">
        <text>L-seryl-tRNA(Sec) + selenophosphate + H(+) = L-selenocysteinyl-tRNA(Sec) + phosphate</text>
        <dbReference type="Rhea" id="RHEA:22728"/>
        <dbReference type="Rhea" id="RHEA-COMP:9742"/>
        <dbReference type="Rhea" id="RHEA-COMP:9743"/>
        <dbReference type="ChEBI" id="CHEBI:15378"/>
        <dbReference type="ChEBI" id="CHEBI:16144"/>
        <dbReference type="ChEBI" id="CHEBI:43474"/>
        <dbReference type="ChEBI" id="CHEBI:78533"/>
        <dbReference type="ChEBI" id="CHEBI:78573"/>
        <dbReference type="EC" id="2.9.1.1"/>
    </reaction>
</comment>
<comment type="cofactor">
    <cofactor evidence="1">
        <name>pyridoxal 5'-phosphate</name>
        <dbReference type="ChEBI" id="CHEBI:597326"/>
    </cofactor>
</comment>
<comment type="pathway">
    <text evidence="1">Aminoacyl-tRNA biosynthesis; selenocysteinyl-tRNA(Sec) biosynthesis; selenocysteinyl-tRNA(Sec) from L-seryl-tRNA(Sec) (bacterial route): step 1/1.</text>
</comment>
<comment type="subcellular location">
    <subcellularLocation>
        <location evidence="1">Cytoplasm</location>
    </subcellularLocation>
</comment>
<comment type="similarity">
    <text evidence="1">Belongs to the SelA family.</text>
</comment>
<feature type="chain" id="PRO_1000050374" description="L-seryl-tRNA(Sec) selenium transferase">
    <location>
        <begin position="1"/>
        <end position="468"/>
    </location>
</feature>
<feature type="modified residue" description="N6-(pyridoxal phosphate)lysine" evidence="1">
    <location>
        <position position="291"/>
    </location>
</feature>
<name>SELA_PSEP7</name>